<organism>
    <name type="scientific">Mycobacterium marinum (strain ATCC BAA-535 / M)</name>
    <dbReference type="NCBI Taxonomy" id="216594"/>
    <lineage>
        <taxon>Bacteria</taxon>
        <taxon>Bacillati</taxon>
        <taxon>Actinomycetota</taxon>
        <taxon>Actinomycetes</taxon>
        <taxon>Mycobacteriales</taxon>
        <taxon>Mycobacteriaceae</taxon>
        <taxon>Mycobacterium</taxon>
        <taxon>Mycobacterium ulcerans group</taxon>
    </lineage>
</organism>
<keyword id="KW-0479">Metal-binding</keyword>
<keyword id="KW-1185">Reference proteome</keyword>
<keyword id="KW-0687">Ribonucleoprotein</keyword>
<keyword id="KW-0689">Ribosomal protein</keyword>
<keyword id="KW-0694">RNA-binding</keyword>
<keyword id="KW-0699">rRNA-binding</keyword>
<keyword id="KW-0862">Zinc</keyword>
<gene>
    <name evidence="1" type="primary">rpmE</name>
    <name type="ordered locus">MMAR_4099</name>
</gene>
<reference key="1">
    <citation type="journal article" date="2008" name="Genome Res.">
        <title>Insights from the complete genome sequence of Mycobacterium marinum on the evolution of Mycobacterium tuberculosis.</title>
        <authorList>
            <person name="Stinear T.P."/>
            <person name="Seemann T."/>
            <person name="Harrison P.F."/>
            <person name="Jenkin G.A."/>
            <person name="Davies J.K."/>
            <person name="Johnson P.D."/>
            <person name="Abdellah Z."/>
            <person name="Arrowsmith C."/>
            <person name="Chillingworth T."/>
            <person name="Churcher C."/>
            <person name="Clarke K."/>
            <person name="Cronin A."/>
            <person name="Davis P."/>
            <person name="Goodhead I."/>
            <person name="Holroyd N."/>
            <person name="Jagels K."/>
            <person name="Lord A."/>
            <person name="Moule S."/>
            <person name="Mungall K."/>
            <person name="Norbertczak H."/>
            <person name="Quail M.A."/>
            <person name="Rabbinowitsch E."/>
            <person name="Walker D."/>
            <person name="White B."/>
            <person name="Whitehead S."/>
            <person name="Small P.L."/>
            <person name="Brosch R."/>
            <person name="Ramakrishnan L."/>
            <person name="Fischbach M.A."/>
            <person name="Parkhill J."/>
            <person name="Cole S.T."/>
        </authorList>
    </citation>
    <scope>NUCLEOTIDE SEQUENCE [LARGE SCALE GENOMIC DNA]</scope>
    <source>
        <strain>ATCC BAA-535 / M</strain>
    </source>
</reference>
<proteinExistence type="inferred from homology"/>
<dbReference type="EMBL" id="CP000854">
    <property type="protein sequence ID" value="ACC42506.1"/>
    <property type="molecule type" value="Genomic_DNA"/>
</dbReference>
<dbReference type="RefSeq" id="WP_011741636.1">
    <property type="nucleotide sequence ID" value="NC_010612.1"/>
</dbReference>
<dbReference type="SMR" id="B2HQL4"/>
<dbReference type="STRING" id="216594.MMAR_4099"/>
<dbReference type="GeneID" id="34341428"/>
<dbReference type="GeneID" id="93438315"/>
<dbReference type="KEGG" id="mmi:MMAR_4099"/>
<dbReference type="eggNOG" id="COG0254">
    <property type="taxonomic scope" value="Bacteria"/>
</dbReference>
<dbReference type="HOGENOM" id="CLU_114306_4_0_11"/>
<dbReference type="OrthoDB" id="9803251at2"/>
<dbReference type="Proteomes" id="UP000001190">
    <property type="component" value="Chromosome"/>
</dbReference>
<dbReference type="GO" id="GO:1990904">
    <property type="term" value="C:ribonucleoprotein complex"/>
    <property type="evidence" value="ECO:0007669"/>
    <property type="project" value="UniProtKB-KW"/>
</dbReference>
<dbReference type="GO" id="GO:0005840">
    <property type="term" value="C:ribosome"/>
    <property type="evidence" value="ECO:0007669"/>
    <property type="project" value="UniProtKB-KW"/>
</dbReference>
<dbReference type="GO" id="GO:0046872">
    <property type="term" value="F:metal ion binding"/>
    <property type="evidence" value="ECO:0007669"/>
    <property type="project" value="UniProtKB-KW"/>
</dbReference>
<dbReference type="GO" id="GO:0019843">
    <property type="term" value="F:rRNA binding"/>
    <property type="evidence" value="ECO:0007669"/>
    <property type="project" value="UniProtKB-KW"/>
</dbReference>
<dbReference type="GO" id="GO:0003735">
    <property type="term" value="F:structural constituent of ribosome"/>
    <property type="evidence" value="ECO:0007669"/>
    <property type="project" value="InterPro"/>
</dbReference>
<dbReference type="GO" id="GO:0006412">
    <property type="term" value="P:translation"/>
    <property type="evidence" value="ECO:0007669"/>
    <property type="project" value="UniProtKB-UniRule"/>
</dbReference>
<dbReference type="Gene3D" id="4.10.830.30">
    <property type="entry name" value="Ribosomal protein L31"/>
    <property type="match status" value="1"/>
</dbReference>
<dbReference type="HAMAP" id="MF_00501">
    <property type="entry name" value="Ribosomal_bL31_1"/>
    <property type="match status" value="1"/>
</dbReference>
<dbReference type="InterPro" id="IPR034704">
    <property type="entry name" value="Ribosomal_bL28/bL31-like_sf"/>
</dbReference>
<dbReference type="InterPro" id="IPR002150">
    <property type="entry name" value="Ribosomal_bL31"/>
</dbReference>
<dbReference type="InterPro" id="IPR027491">
    <property type="entry name" value="Ribosomal_bL31_A"/>
</dbReference>
<dbReference type="InterPro" id="IPR042105">
    <property type="entry name" value="Ribosomal_bL31_sf"/>
</dbReference>
<dbReference type="NCBIfam" id="TIGR00105">
    <property type="entry name" value="L31"/>
    <property type="match status" value="1"/>
</dbReference>
<dbReference type="NCBIfam" id="NF000612">
    <property type="entry name" value="PRK00019.1"/>
    <property type="match status" value="1"/>
</dbReference>
<dbReference type="NCBIfam" id="NF001809">
    <property type="entry name" value="PRK00528.1"/>
    <property type="match status" value="1"/>
</dbReference>
<dbReference type="PANTHER" id="PTHR33280">
    <property type="entry name" value="50S RIBOSOMAL PROTEIN L31, CHLOROPLASTIC"/>
    <property type="match status" value="1"/>
</dbReference>
<dbReference type="PANTHER" id="PTHR33280:SF1">
    <property type="entry name" value="LARGE RIBOSOMAL SUBUNIT PROTEIN BL31C"/>
    <property type="match status" value="1"/>
</dbReference>
<dbReference type="Pfam" id="PF01197">
    <property type="entry name" value="Ribosomal_L31"/>
    <property type="match status" value="1"/>
</dbReference>
<dbReference type="PRINTS" id="PR01249">
    <property type="entry name" value="RIBOSOMALL31"/>
</dbReference>
<dbReference type="SUPFAM" id="SSF143800">
    <property type="entry name" value="L28p-like"/>
    <property type="match status" value="1"/>
</dbReference>
<dbReference type="PROSITE" id="PS01143">
    <property type="entry name" value="RIBOSOMAL_L31"/>
    <property type="match status" value="1"/>
</dbReference>
<accession>B2HQL4</accession>
<feature type="chain" id="PRO_1000126665" description="Large ribosomal subunit protein bL31">
    <location>
        <begin position="1"/>
        <end position="81"/>
    </location>
</feature>
<feature type="binding site" evidence="1">
    <location>
        <position position="16"/>
    </location>
    <ligand>
        <name>Zn(2+)</name>
        <dbReference type="ChEBI" id="CHEBI:29105"/>
    </ligand>
</feature>
<feature type="binding site" evidence="1">
    <location>
        <position position="18"/>
    </location>
    <ligand>
        <name>Zn(2+)</name>
        <dbReference type="ChEBI" id="CHEBI:29105"/>
    </ligand>
</feature>
<feature type="binding site" evidence="1">
    <location>
        <position position="38"/>
    </location>
    <ligand>
        <name>Zn(2+)</name>
        <dbReference type="ChEBI" id="CHEBI:29105"/>
    </ligand>
</feature>
<feature type="binding site" evidence="1">
    <location>
        <position position="41"/>
    </location>
    <ligand>
        <name>Zn(2+)</name>
        <dbReference type="ChEBI" id="CHEBI:29105"/>
    </ligand>
</feature>
<name>RL31_MYCMM</name>
<evidence type="ECO:0000255" key="1">
    <source>
        <dbReference type="HAMAP-Rule" id="MF_00501"/>
    </source>
</evidence>
<evidence type="ECO:0000305" key="2"/>
<protein>
    <recommendedName>
        <fullName evidence="1">Large ribosomal subunit protein bL31</fullName>
    </recommendedName>
    <alternativeName>
        <fullName evidence="2">50S ribosomal protein L31</fullName>
    </alternativeName>
</protein>
<sequence>MKSDIHPTYEETTVVCGCGNTFQTRSTKQGGRIVAEVCSQCHPFYTGKQKILDSGGRVARFERRYGKRKAGADKDQAAADK</sequence>
<comment type="function">
    <text evidence="1">Binds the 23S rRNA.</text>
</comment>
<comment type="cofactor">
    <cofactor evidence="1">
        <name>Zn(2+)</name>
        <dbReference type="ChEBI" id="CHEBI:29105"/>
    </cofactor>
    <text evidence="1">Binds 1 zinc ion per subunit.</text>
</comment>
<comment type="subunit">
    <text evidence="1">Part of the 50S ribosomal subunit.</text>
</comment>
<comment type="similarity">
    <text evidence="1">Belongs to the bacterial ribosomal protein bL31 family. Type A subfamily.</text>
</comment>